<protein>
    <recommendedName>
        <fullName>IQ domain-containing protein C</fullName>
    </recommendedName>
</protein>
<evidence type="ECO:0000255" key="1"/>
<evidence type="ECO:0000255" key="2">
    <source>
        <dbReference type="PROSITE-ProRule" id="PRU00116"/>
    </source>
</evidence>
<evidence type="ECO:0000256" key="3">
    <source>
        <dbReference type="SAM" id="MobiDB-lite"/>
    </source>
</evidence>
<sequence length="418" mass="46912">MDPDLFLRKVSTLQAGFRGFLVRRQFQSLRAEYEAIVQEIEGDLSTLQWTGGWIPKPVFLPEAKSHQSWKAEKISNPEQKLWSHSPHKDSEKELIWEEMVQKKTEKSPANPGSLCRDDSAWPQAEQGRKASQGNSQDTSVSKMENADLGLSQSQQELQEQRNHLAMELLWLQQAINSRKEYLILKQTLRSPEASQTRDKHRGQAYEKTSLHSSCVLDNQSYRDRIIGESHHAEDSSHKGRLKPQKHPDSVTSAGKTTAGSKGRELCYRNSASQLPAALESQAGGDRVTKGPDHGGQPFKETSLQQLKVLEDQIPGDLKFRSPCSRKAETQLPTLSENQNIEDRYSRKPSRSAGPCDLNILEGHMIWDETLAGQEQGSLDLIRTKPPKSQPPSAGSSGHGNTSELSPEGWKNRGILQWR</sequence>
<proteinExistence type="evidence at transcript level"/>
<dbReference type="EMBL" id="AL671759">
    <property type="status" value="NOT_ANNOTATED_CDS"/>
    <property type="molecule type" value="Genomic_DNA"/>
</dbReference>
<dbReference type="EMBL" id="BC026978">
    <property type="protein sequence ID" value="AAH26978.1"/>
    <property type="molecule type" value="mRNA"/>
</dbReference>
<dbReference type="EMBL" id="BC031493">
    <property type="status" value="NOT_ANNOTATED_CDS"/>
    <property type="molecule type" value="mRNA"/>
</dbReference>
<dbReference type="CCDS" id="CCDS38886.1"/>
<dbReference type="RefSeq" id="NP_932143.2">
    <property type="nucleotide sequence ID" value="NM_198026.3"/>
</dbReference>
<dbReference type="SMR" id="A2ADZ8"/>
<dbReference type="FunCoup" id="A2ADZ8">
    <property type="interactions" value="38"/>
</dbReference>
<dbReference type="STRING" id="10090.ENSMUSP00000040584"/>
<dbReference type="iPTMnet" id="A2ADZ8"/>
<dbReference type="PhosphoSitePlus" id="A2ADZ8"/>
<dbReference type="PaxDb" id="10090-ENSMUSP00000040584"/>
<dbReference type="ProteomicsDB" id="269086"/>
<dbReference type="Antibodypedia" id="31251">
    <property type="antibodies" value="94 antibodies from 15 providers"/>
</dbReference>
<dbReference type="Ensembl" id="ENSMUST00000046675.12">
    <property type="protein sequence ID" value="ENSMUSP00000040584.6"/>
    <property type="gene ID" value="ENSMUSG00000040795.13"/>
</dbReference>
<dbReference type="GeneID" id="230767"/>
<dbReference type="KEGG" id="mmu:230767"/>
<dbReference type="UCSC" id="uc008uxs.1">
    <property type="organism name" value="mouse"/>
</dbReference>
<dbReference type="AGR" id="MGI:2446212"/>
<dbReference type="CTD" id="55721"/>
<dbReference type="MGI" id="MGI:2446212">
    <property type="gene designation" value="Iqcc"/>
</dbReference>
<dbReference type="VEuPathDB" id="HostDB:ENSMUSG00000040795"/>
<dbReference type="eggNOG" id="ENOG502S8YC">
    <property type="taxonomic scope" value="Eukaryota"/>
</dbReference>
<dbReference type="GeneTree" id="ENSGT00390000017195"/>
<dbReference type="HOGENOM" id="CLU_046548_0_0_1"/>
<dbReference type="InParanoid" id="A2ADZ8"/>
<dbReference type="OMA" id="DHRAQTC"/>
<dbReference type="OrthoDB" id="6161953at2759"/>
<dbReference type="PhylomeDB" id="A2ADZ8"/>
<dbReference type="TreeFam" id="TF330928"/>
<dbReference type="BioGRID-ORCS" id="230767">
    <property type="hits" value="1 hit in 78 CRISPR screens"/>
</dbReference>
<dbReference type="ChiTaRS" id="Iqcc">
    <property type="organism name" value="mouse"/>
</dbReference>
<dbReference type="PRO" id="PR:A2ADZ8"/>
<dbReference type="Proteomes" id="UP000000589">
    <property type="component" value="Chromosome 4"/>
</dbReference>
<dbReference type="RNAct" id="A2ADZ8">
    <property type="molecule type" value="protein"/>
</dbReference>
<dbReference type="Bgee" id="ENSMUSG00000040795">
    <property type="expression patterns" value="Expressed in spermatocyte and 77 other cell types or tissues"/>
</dbReference>
<dbReference type="ExpressionAtlas" id="A2ADZ8">
    <property type="expression patterns" value="baseline and differential"/>
</dbReference>
<dbReference type="InterPro" id="IPR042506">
    <property type="entry name" value="IQCC"/>
</dbReference>
<dbReference type="PANTHER" id="PTHR16049">
    <property type="entry name" value="IQ DOMAIN-CONTAINING PROTEIN C"/>
    <property type="match status" value="1"/>
</dbReference>
<dbReference type="PANTHER" id="PTHR16049:SF8">
    <property type="entry name" value="IQ DOMAIN-CONTAINING PROTEIN C"/>
    <property type="match status" value="1"/>
</dbReference>
<dbReference type="PROSITE" id="PS50096">
    <property type="entry name" value="IQ"/>
    <property type="match status" value="1"/>
</dbReference>
<organism>
    <name type="scientific">Mus musculus</name>
    <name type="common">Mouse</name>
    <dbReference type="NCBI Taxonomy" id="10090"/>
    <lineage>
        <taxon>Eukaryota</taxon>
        <taxon>Metazoa</taxon>
        <taxon>Chordata</taxon>
        <taxon>Craniata</taxon>
        <taxon>Vertebrata</taxon>
        <taxon>Euteleostomi</taxon>
        <taxon>Mammalia</taxon>
        <taxon>Eutheria</taxon>
        <taxon>Euarchontoglires</taxon>
        <taxon>Glires</taxon>
        <taxon>Rodentia</taxon>
        <taxon>Myomorpha</taxon>
        <taxon>Muroidea</taxon>
        <taxon>Muridae</taxon>
        <taxon>Murinae</taxon>
        <taxon>Mus</taxon>
        <taxon>Mus</taxon>
    </lineage>
</organism>
<feature type="chain" id="PRO_0000282546" description="IQ domain-containing protein C">
    <location>
        <begin position="1"/>
        <end position="418"/>
    </location>
</feature>
<feature type="domain" description="IQ" evidence="2">
    <location>
        <begin position="6"/>
        <end position="35"/>
    </location>
</feature>
<feature type="region of interest" description="Disordered" evidence="3">
    <location>
        <begin position="101"/>
        <end position="142"/>
    </location>
</feature>
<feature type="region of interest" description="Disordered" evidence="3">
    <location>
        <begin position="230"/>
        <end position="264"/>
    </location>
</feature>
<feature type="region of interest" description="Disordered" evidence="3">
    <location>
        <begin position="280"/>
        <end position="299"/>
    </location>
</feature>
<feature type="region of interest" description="Disordered" evidence="3">
    <location>
        <begin position="327"/>
        <end position="355"/>
    </location>
</feature>
<feature type="region of interest" description="Disordered" evidence="3">
    <location>
        <begin position="376"/>
        <end position="418"/>
    </location>
</feature>
<feature type="coiled-coil region" evidence="1">
    <location>
        <begin position="141"/>
        <end position="176"/>
    </location>
</feature>
<feature type="compositionally biased region" description="Polar residues" evidence="3">
    <location>
        <begin position="129"/>
        <end position="142"/>
    </location>
</feature>
<feature type="compositionally biased region" description="Polar residues" evidence="3">
    <location>
        <begin position="249"/>
        <end position="259"/>
    </location>
</feature>
<feature type="compositionally biased region" description="Polar residues" evidence="3">
    <location>
        <begin position="390"/>
        <end position="404"/>
    </location>
</feature>
<keyword id="KW-0175">Coiled coil</keyword>
<keyword id="KW-1185">Reference proteome</keyword>
<reference key="1">
    <citation type="journal article" date="2009" name="PLoS Biol.">
        <title>Lineage-specific biology revealed by a finished genome assembly of the mouse.</title>
        <authorList>
            <person name="Church D.M."/>
            <person name="Goodstadt L."/>
            <person name="Hillier L.W."/>
            <person name="Zody M.C."/>
            <person name="Goldstein S."/>
            <person name="She X."/>
            <person name="Bult C.J."/>
            <person name="Agarwala R."/>
            <person name="Cherry J.L."/>
            <person name="DiCuccio M."/>
            <person name="Hlavina W."/>
            <person name="Kapustin Y."/>
            <person name="Meric P."/>
            <person name="Maglott D."/>
            <person name="Birtle Z."/>
            <person name="Marques A.C."/>
            <person name="Graves T."/>
            <person name="Zhou S."/>
            <person name="Teague B."/>
            <person name="Potamousis K."/>
            <person name="Churas C."/>
            <person name="Place M."/>
            <person name="Herschleb J."/>
            <person name="Runnheim R."/>
            <person name="Forrest D."/>
            <person name="Amos-Landgraf J."/>
            <person name="Schwartz D.C."/>
            <person name="Cheng Z."/>
            <person name="Lindblad-Toh K."/>
            <person name="Eichler E.E."/>
            <person name="Ponting C.P."/>
        </authorList>
    </citation>
    <scope>NUCLEOTIDE SEQUENCE [LARGE SCALE GENOMIC DNA]</scope>
    <source>
        <strain>C57BL/6J</strain>
    </source>
</reference>
<reference key="2">
    <citation type="journal article" date="2004" name="Genome Res.">
        <title>The status, quality, and expansion of the NIH full-length cDNA project: the Mammalian Gene Collection (MGC).</title>
        <authorList>
            <consortium name="The MGC Project Team"/>
        </authorList>
    </citation>
    <scope>NUCLEOTIDE SEQUENCE [LARGE SCALE MRNA] OF 64-418</scope>
    <source>
        <strain>FVB/N</strain>
        <tissue>Eye</tissue>
        <tissue>Mammary tumor</tissue>
    </source>
</reference>
<gene>
    <name type="primary">Iqcc</name>
</gene>
<accession>A2ADZ8</accession>
<accession>Q8K0F9</accession>
<accession>Q8R0F4</accession>
<name>IQCC_MOUSE</name>